<proteinExistence type="evidence at transcript level"/>
<name>AVLA4_WHEAT</name>
<protein>
    <recommendedName>
        <fullName>Avenin-like a4</fullName>
    </recommendedName>
</protein>
<dbReference type="EMBL" id="GU211170">
    <property type="protein sequence ID" value="ADA62374.1"/>
    <property type="molecule type" value="mRNA"/>
</dbReference>
<dbReference type="STRING" id="4565.D2KFH1"/>
<dbReference type="EnsemblPlants" id="TraesPARA_EIv1.0_1193740.1">
    <property type="protein sequence ID" value="TraesPARA_EIv1.0_1193740.1.CDS1"/>
    <property type="gene ID" value="TraesPARA_EIv1.0_1193740"/>
</dbReference>
<dbReference type="Gramene" id="TraesPARA_EIv1.0_1193740.1">
    <property type="protein sequence ID" value="TraesPARA_EIv1.0_1193740.1.CDS1"/>
    <property type="gene ID" value="TraesPARA_EIv1.0_1193740"/>
</dbReference>
<dbReference type="Proteomes" id="UP000019116">
    <property type="component" value="Unplaced"/>
</dbReference>
<dbReference type="ExpressionAtlas" id="D2KFH1">
    <property type="expression patterns" value="baseline"/>
</dbReference>
<dbReference type="GO" id="GO:0045735">
    <property type="term" value="F:nutrient reservoir activity"/>
    <property type="evidence" value="ECO:0007669"/>
    <property type="project" value="UniProtKB-KW"/>
</dbReference>
<dbReference type="CDD" id="cd00261">
    <property type="entry name" value="AAI_SS"/>
    <property type="match status" value="1"/>
</dbReference>
<dbReference type="Gene3D" id="1.10.110.10">
    <property type="entry name" value="Plant lipid-transfer and hydrophobic proteins"/>
    <property type="match status" value="1"/>
</dbReference>
<dbReference type="InterPro" id="IPR036312">
    <property type="entry name" value="Bifun_inhib/LTP/seed_sf"/>
</dbReference>
<dbReference type="InterPro" id="IPR016140">
    <property type="entry name" value="Bifunc_inhib/LTP/seed_store"/>
</dbReference>
<dbReference type="InterPro" id="IPR001954">
    <property type="entry name" value="Glia_glutenin"/>
</dbReference>
<dbReference type="PANTHER" id="PTHR33454:SF4">
    <property type="entry name" value="AVENIN-LIKE A4"/>
    <property type="match status" value="1"/>
</dbReference>
<dbReference type="PANTHER" id="PTHR33454">
    <property type="entry name" value="PROLAMIN PPROL 14P"/>
    <property type="match status" value="1"/>
</dbReference>
<dbReference type="Pfam" id="PF13016">
    <property type="entry name" value="Gliadin"/>
    <property type="match status" value="1"/>
</dbReference>
<dbReference type="PRINTS" id="PR00208">
    <property type="entry name" value="GLIADGLUTEN"/>
</dbReference>
<dbReference type="SMART" id="SM00499">
    <property type="entry name" value="AAI"/>
    <property type="match status" value="1"/>
</dbReference>
<dbReference type="SUPFAM" id="SSF47699">
    <property type="entry name" value="Bifunctional inhibitor/lipid-transfer protein/seed storage 2S albumin"/>
    <property type="match status" value="1"/>
</dbReference>
<accession>D2KFH1</accession>
<organism>
    <name type="scientific">Triticum aestivum</name>
    <name type="common">Wheat</name>
    <dbReference type="NCBI Taxonomy" id="4565"/>
    <lineage>
        <taxon>Eukaryota</taxon>
        <taxon>Viridiplantae</taxon>
        <taxon>Streptophyta</taxon>
        <taxon>Embryophyta</taxon>
        <taxon>Tracheophyta</taxon>
        <taxon>Spermatophyta</taxon>
        <taxon>Magnoliopsida</taxon>
        <taxon>Liliopsida</taxon>
        <taxon>Poales</taxon>
        <taxon>Poaceae</taxon>
        <taxon>BOP clade</taxon>
        <taxon>Pooideae</taxon>
        <taxon>Triticodae</taxon>
        <taxon>Triticeae</taxon>
        <taxon>Triticinae</taxon>
        <taxon>Triticum</taxon>
    </lineage>
</organism>
<feature type="signal peptide" evidence="2">
    <location>
        <begin position="1"/>
        <end position="19"/>
    </location>
</feature>
<feature type="chain" id="PRO_0000410695" description="Avenin-like a4">
    <location>
        <begin position="20"/>
        <end position="172"/>
    </location>
</feature>
<evidence type="ECO:0000250" key="1"/>
<evidence type="ECO:0000255" key="2"/>
<evidence type="ECO:0000305" key="3"/>
<reference key="1">
    <citation type="journal article" date="2001" name="Theor. Appl. Genet.">
        <title>Identification of several new classes of low-molecular-weight wheat gliadin-related proteins and genes.</title>
        <authorList>
            <person name="Anderson O.D."/>
            <person name="Hsia C.C."/>
            <person name="Adalsteins A.E."/>
            <person name="Lew E.J."/>
            <person name="Kasarda D.D."/>
        </authorList>
        <dbReference type="AGRICOLA" id="IND23233454"/>
    </citation>
    <scope>NUCLEOTIDE SEQUENCE [MRNA]</scope>
    <source>
        <strain>cv. Cheyenne</strain>
    </source>
</reference>
<keyword id="KW-1015">Disulfide bond</keyword>
<keyword id="KW-1185">Reference proteome</keyword>
<keyword id="KW-0708">Seed storage protein</keyword>
<keyword id="KW-0732">Signal</keyword>
<keyword id="KW-0758">Storage protein</keyword>
<comment type="function">
    <text evidence="1">Seed storage protein. Not integrated in the gluten polymer through disulfide bonds, unless incorporated by reduction and reoxidation during dough making. Increases dough strength and bread volume, but decreases dough stability when added into a base wheat flour (By similarity).</text>
</comment>
<comment type="PTM">
    <text evidence="3">Contains 7 disulfide bonds.</text>
</comment>
<comment type="similarity">
    <text evidence="3">Belongs to the prolamin family.</text>
</comment>
<sequence length="172" mass="18916">MKTMFILALIALAATSVVAQLDTTCSQGYGQCQQQPQQQVNTCSALLQQCSPTPYVQSQMWQASGCQLMRQQCCQPLAQISEQARCQAVCSVAQVIMRQQQGQSFGQPQQQVQSFSQPQHQVPIEITRMVLQTLPSMCNVNIPQYCTTTPCRTITQTPYNIPMSATCVGGTC</sequence>